<keyword id="KW-0687">Ribonucleoprotein</keyword>
<keyword id="KW-0689">Ribosomal protein</keyword>
<keyword id="KW-0694">RNA-binding</keyword>
<keyword id="KW-0699">rRNA-binding</keyword>
<gene>
    <name evidence="1" type="primary">rpl23</name>
    <name type="ordered locus">PYRAB03400</name>
    <name type="ORF">PAB7083</name>
</gene>
<dbReference type="EMBL" id="AJ248284">
    <property type="protein sequence ID" value="CAB49262.1"/>
    <property type="molecule type" value="Genomic_DNA"/>
</dbReference>
<dbReference type="EMBL" id="HE613800">
    <property type="protein sequence ID" value="CCE69717.1"/>
    <property type="molecule type" value="Genomic_DNA"/>
</dbReference>
<dbReference type="PIR" id="G75147">
    <property type="entry name" value="G75147"/>
</dbReference>
<dbReference type="RefSeq" id="WP_010867462.1">
    <property type="nucleotide sequence ID" value="NC_000868.1"/>
</dbReference>
<dbReference type="SMR" id="Q9V1T7"/>
<dbReference type="STRING" id="272844.PAB7083"/>
<dbReference type="KEGG" id="pab:PAB7083"/>
<dbReference type="PATRIC" id="fig|272844.11.peg.361"/>
<dbReference type="eggNOG" id="arCOG04072">
    <property type="taxonomic scope" value="Archaea"/>
</dbReference>
<dbReference type="HOGENOM" id="CLU_037562_4_2_2"/>
<dbReference type="OrthoDB" id="7751at2157"/>
<dbReference type="PhylomeDB" id="Q9V1T7"/>
<dbReference type="Proteomes" id="UP000000810">
    <property type="component" value="Chromosome"/>
</dbReference>
<dbReference type="Proteomes" id="UP000009139">
    <property type="component" value="Chromosome"/>
</dbReference>
<dbReference type="GO" id="GO:1990904">
    <property type="term" value="C:ribonucleoprotein complex"/>
    <property type="evidence" value="ECO:0007669"/>
    <property type="project" value="UniProtKB-KW"/>
</dbReference>
<dbReference type="GO" id="GO:0005840">
    <property type="term" value="C:ribosome"/>
    <property type="evidence" value="ECO:0007669"/>
    <property type="project" value="UniProtKB-KW"/>
</dbReference>
<dbReference type="GO" id="GO:0019843">
    <property type="term" value="F:rRNA binding"/>
    <property type="evidence" value="ECO:0007669"/>
    <property type="project" value="UniProtKB-UniRule"/>
</dbReference>
<dbReference type="GO" id="GO:0003735">
    <property type="term" value="F:structural constituent of ribosome"/>
    <property type="evidence" value="ECO:0007669"/>
    <property type="project" value="InterPro"/>
</dbReference>
<dbReference type="GO" id="GO:0006412">
    <property type="term" value="P:translation"/>
    <property type="evidence" value="ECO:0007669"/>
    <property type="project" value="UniProtKB-UniRule"/>
</dbReference>
<dbReference type="FunFam" id="3.30.70.330:FF:001084">
    <property type="entry name" value="50S ribosomal protein L23"/>
    <property type="match status" value="1"/>
</dbReference>
<dbReference type="Gene3D" id="3.30.70.330">
    <property type="match status" value="1"/>
</dbReference>
<dbReference type="HAMAP" id="MF_01369_A">
    <property type="entry name" value="Ribosomal_uL23_A"/>
    <property type="match status" value="1"/>
</dbReference>
<dbReference type="HAMAP" id="MF_01369_B">
    <property type="entry name" value="Ribosomal_uL23_B"/>
    <property type="match status" value="1"/>
</dbReference>
<dbReference type="InterPro" id="IPR012677">
    <property type="entry name" value="Nucleotide-bd_a/b_plait_sf"/>
</dbReference>
<dbReference type="InterPro" id="IPR019985">
    <property type="entry name" value="Ribosomal_uL23"/>
</dbReference>
<dbReference type="InterPro" id="IPR013025">
    <property type="entry name" value="Ribosomal_uL23-like"/>
</dbReference>
<dbReference type="InterPro" id="IPR012678">
    <property type="entry name" value="Ribosomal_uL23/eL15/eS24_sf"/>
</dbReference>
<dbReference type="InterPro" id="IPR001014">
    <property type="entry name" value="Ribosomal_uL23_CS"/>
</dbReference>
<dbReference type="NCBIfam" id="NF011118">
    <property type="entry name" value="PRK14548.1"/>
    <property type="match status" value="1"/>
</dbReference>
<dbReference type="NCBIfam" id="TIGR03636">
    <property type="entry name" value="uL23_arch"/>
    <property type="match status" value="1"/>
</dbReference>
<dbReference type="PANTHER" id="PTHR11620">
    <property type="entry name" value="60S RIBOSOMAL PROTEIN L23A"/>
    <property type="match status" value="1"/>
</dbReference>
<dbReference type="Pfam" id="PF00276">
    <property type="entry name" value="Ribosomal_L23"/>
    <property type="match status" value="1"/>
</dbReference>
<dbReference type="SUPFAM" id="SSF54189">
    <property type="entry name" value="Ribosomal proteins S24e, L23 and L15e"/>
    <property type="match status" value="1"/>
</dbReference>
<dbReference type="PROSITE" id="PS00050">
    <property type="entry name" value="RIBOSOMAL_L23"/>
    <property type="match status" value="1"/>
</dbReference>
<comment type="function">
    <text evidence="1">Binds to 23S rRNA. One of the proteins that surrounds the polypeptide exit tunnel on the outside of the ribosome.</text>
</comment>
<comment type="subunit">
    <text evidence="1">Part of the 50S ribosomal subunit. Contacts protein L29.</text>
</comment>
<comment type="similarity">
    <text evidence="1">Belongs to the universal ribosomal protein uL23 family.</text>
</comment>
<sequence>MDPYKVIIRPVITDKAISLIEKENKLTFIVDRRATKQDIKRAIEEIFNVKVEKVNTLITPKGEKKAYVKLKPEYSASEIAARLGLF</sequence>
<reference key="1">
    <citation type="journal article" date="2003" name="Mol. Microbiol.">
        <title>An integrated analysis of the genome of the hyperthermophilic archaeon Pyrococcus abyssi.</title>
        <authorList>
            <person name="Cohen G.N."/>
            <person name="Barbe V."/>
            <person name="Flament D."/>
            <person name="Galperin M."/>
            <person name="Heilig R."/>
            <person name="Lecompte O."/>
            <person name="Poch O."/>
            <person name="Prieur D."/>
            <person name="Querellou J."/>
            <person name="Ripp R."/>
            <person name="Thierry J.-C."/>
            <person name="Van der Oost J."/>
            <person name="Weissenbach J."/>
            <person name="Zivanovic Y."/>
            <person name="Forterre P."/>
        </authorList>
    </citation>
    <scope>NUCLEOTIDE SEQUENCE [LARGE SCALE GENOMIC DNA]</scope>
    <source>
        <strain>GE5 / Orsay</strain>
    </source>
</reference>
<reference key="2">
    <citation type="journal article" date="2012" name="Curr. Microbiol.">
        <title>Re-annotation of two hyperthermophilic archaea Pyrococcus abyssi GE5 and Pyrococcus furiosus DSM 3638.</title>
        <authorList>
            <person name="Gao J."/>
            <person name="Wang J."/>
        </authorList>
    </citation>
    <scope>GENOME REANNOTATION</scope>
    <source>
        <strain>GE5 / Orsay</strain>
    </source>
</reference>
<protein>
    <recommendedName>
        <fullName evidence="1">Large ribosomal subunit protein uL23</fullName>
    </recommendedName>
    <alternativeName>
        <fullName evidence="2">50S ribosomal protein L23</fullName>
    </alternativeName>
</protein>
<accession>Q9V1T7</accession>
<accession>G8ZHX4</accession>
<name>RL23_PYRAB</name>
<organism>
    <name type="scientific">Pyrococcus abyssi (strain GE5 / Orsay)</name>
    <dbReference type="NCBI Taxonomy" id="272844"/>
    <lineage>
        <taxon>Archaea</taxon>
        <taxon>Methanobacteriati</taxon>
        <taxon>Methanobacteriota</taxon>
        <taxon>Thermococci</taxon>
        <taxon>Thermococcales</taxon>
        <taxon>Thermococcaceae</taxon>
        <taxon>Pyrococcus</taxon>
    </lineage>
</organism>
<evidence type="ECO:0000255" key="1">
    <source>
        <dbReference type="HAMAP-Rule" id="MF_01369"/>
    </source>
</evidence>
<evidence type="ECO:0000305" key="2"/>
<feature type="chain" id="PRO_0000129440" description="Large ribosomal subunit protein uL23">
    <location>
        <begin position="1"/>
        <end position="86"/>
    </location>
</feature>
<proteinExistence type="inferred from homology"/>